<gene>
    <name evidence="1" type="primary">rsxA</name>
    <name type="ordered locus">ECS88_1675</name>
</gene>
<feature type="chain" id="PRO_1000191721" description="Ion-translocating oxidoreductase complex subunit A">
    <location>
        <begin position="1"/>
        <end position="193"/>
    </location>
</feature>
<feature type="transmembrane region" description="Helical" evidence="1">
    <location>
        <begin position="5"/>
        <end position="25"/>
    </location>
</feature>
<feature type="transmembrane region" description="Helical" evidence="1">
    <location>
        <begin position="47"/>
        <end position="67"/>
    </location>
</feature>
<feature type="transmembrane region" description="Helical" evidence="1">
    <location>
        <begin position="72"/>
        <end position="92"/>
    </location>
</feature>
<feature type="transmembrane region" description="Helical" evidence="1">
    <location>
        <begin position="102"/>
        <end position="122"/>
    </location>
</feature>
<feature type="transmembrane region" description="Helical" evidence="1">
    <location>
        <begin position="134"/>
        <end position="154"/>
    </location>
</feature>
<feature type="transmembrane region" description="Helical" evidence="1">
    <location>
        <begin position="171"/>
        <end position="191"/>
    </location>
</feature>
<dbReference type="EC" id="7.-.-.-" evidence="1"/>
<dbReference type="EMBL" id="CU928161">
    <property type="protein sequence ID" value="CAR02988.1"/>
    <property type="molecule type" value="Genomic_DNA"/>
</dbReference>
<dbReference type="RefSeq" id="WP_000133202.1">
    <property type="nucleotide sequence ID" value="NC_011742.1"/>
</dbReference>
<dbReference type="SMR" id="B7M9Y1"/>
<dbReference type="KEGG" id="ecz:ECS88_1675"/>
<dbReference type="HOGENOM" id="CLU_095255_1_0_6"/>
<dbReference type="Proteomes" id="UP000000747">
    <property type="component" value="Chromosome"/>
</dbReference>
<dbReference type="GO" id="GO:0005886">
    <property type="term" value="C:plasma membrane"/>
    <property type="evidence" value="ECO:0007669"/>
    <property type="project" value="UniProtKB-SubCell"/>
</dbReference>
<dbReference type="GO" id="GO:0022900">
    <property type="term" value="P:electron transport chain"/>
    <property type="evidence" value="ECO:0007669"/>
    <property type="project" value="UniProtKB-UniRule"/>
</dbReference>
<dbReference type="HAMAP" id="MF_00459">
    <property type="entry name" value="RsxA_RnfA"/>
    <property type="match status" value="1"/>
</dbReference>
<dbReference type="InterPro" id="IPR011293">
    <property type="entry name" value="Ion_transpt_RnfA/RsxA"/>
</dbReference>
<dbReference type="InterPro" id="IPR003667">
    <property type="entry name" value="NqrDE/RnfAE"/>
</dbReference>
<dbReference type="InterPro" id="IPR050133">
    <property type="entry name" value="NqrDE/RnfAE_oxidrdctase"/>
</dbReference>
<dbReference type="NCBIfam" id="NF003481">
    <property type="entry name" value="PRK05151.1"/>
    <property type="match status" value="1"/>
</dbReference>
<dbReference type="NCBIfam" id="TIGR01943">
    <property type="entry name" value="rnfA"/>
    <property type="match status" value="1"/>
</dbReference>
<dbReference type="PANTHER" id="PTHR30335">
    <property type="entry name" value="INTEGRAL MEMBRANE PROTEIN OF SOXR-REDUCING COMPLEX"/>
    <property type="match status" value="1"/>
</dbReference>
<dbReference type="PANTHER" id="PTHR30335:SF0">
    <property type="entry name" value="ION-TRANSLOCATING OXIDOREDUCTASE COMPLEX SUBUNIT A"/>
    <property type="match status" value="1"/>
</dbReference>
<dbReference type="Pfam" id="PF02508">
    <property type="entry name" value="Rnf-Nqr"/>
    <property type="match status" value="1"/>
</dbReference>
<dbReference type="PIRSF" id="PIRSF006102">
    <property type="entry name" value="NQR_DE"/>
    <property type="match status" value="1"/>
</dbReference>
<protein>
    <recommendedName>
        <fullName evidence="1">Ion-translocating oxidoreductase complex subunit A</fullName>
        <ecNumber evidence="1">7.-.-.-</ecNumber>
    </recommendedName>
    <alternativeName>
        <fullName evidence="1">Rsx electron transport complex subunit A</fullName>
    </alternativeName>
</protein>
<proteinExistence type="inferred from homology"/>
<name>RSXA_ECO45</name>
<evidence type="ECO:0000255" key="1">
    <source>
        <dbReference type="HAMAP-Rule" id="MF_00459"/>
    </source>
</evidence>
<keyword id="KW-0997">Cell inner membrane</keyword>
<keyword id="KW-1003">Cell membrane</keyword>
<keyword id="KW-0249">Electron transport</keyword>
<keyword id="KW-0472">Membrane</keyword>
<keyword id="KW-1185">Reference proteome</keyword>
<keyword id="KW-1278">Translocase</keyword>
<keyword id="KW-0812">Transmembrane</keyword>
<keyword id="KW-1133">Transmembrane helix</keyword>
<keyword id="KW-0813">Transport</keyword>
<comment type="function">
    <text evidence="1">Part of a membrane-bound complex that couples electron transfer with translocation of ions across the membrane. Required to maintain the reduced state of SoxR.</text>
</comment>
<comment type="subunit">
    <text evidence="1">The complex is composed of six subunits: RsxA, RsxB, RsxC, RsxD, RsxE and RsxG.</text>
</comment>
<comment type="subcellular location">
    <subcellularLocation>
        <location evidence="1">Cell inner membrane</location>
        <topology evidence="1">Multi-pass membrane protein</topology>
    </subcellularLocation>
</comment>
<comment type="similarity">
    <text evidence="1">Belongs to the NqrDE/RnfAE family.</text>
</comment>
<accession>B7M9Y1</accession>
<sequence length="193" mass="20916">MTDYLLLFVGTVLVNNFVLVKFLGLCPFMGVSKKLETAMGMGLATTFVMTLASICAWLIDTWILIPLNLIYLRTMAFILVIAVVVQFTEMVVRKTSPVLYRLLGIFLPLITTNCAVLGVALLNINLGHNFLQSALYGFSAAVGFSLVMVLFAAIRERLAVADVPAPFRGNAIALITAGLMSLAFMGFSGLVKL</sequence>
<organism>
    <name type="scientific">Escherichia coli O45:K1 (strain S88 / ExPEC)</name>
    <dbReference type="NCBI Taxonomy" id="585035"/>
    <lineage>
        <taxon>Bacteria</taxon>
        <taxon>Pseudomonadati</taxon>
        <taxon>Pseudomonadota</taxon>
        <taxon>Gammaproteobacteria</taxon>
        <taxon>Enterobacterales</taxon>
        <taxon>Enterobacteriaceae</taxon>
        <taxon>Escherichia</taxon>
    </lineage>
</organism>
<reference key="1">
    <citation type="journal article" date="2009" name="PLoS Genet.">
        <title>Organised genome dynamics in the Escherichia coli species results in highly diverse adaptive paths.</title>
        <authorList>
            <person name="Touchon M."/>
            <person name="Hoede C."/>
            <person name="Tenaillon O."/>
            <person name="Barbe V."/>
            <person name="Baeriswyl S."/>
            <person name="Bidet P."/>
            <person name="Bingen E."/>
            <person name="Bonacorsi S."/>
            <person name="Bouchier C."/>
            <person name="Bouvet O."/>
            <person name="Calteau A."/>
            <person name="Chiapello H."/>
            <person name="Clermont O."/>
            <person name="Cruveiller S."/>
            <person name="Danchin A."/>
            <person name="Diard M."/>
            <person name="Dossat C."/>
            <person name="Karoui M.E."/>
            <person name="Frapy E."/>
            <person name="Garry L."/>
            <person name="Ghigo J.M."/>
            <person name="Gilles A.M."/>
            <person name="Johnson J."/>
            <person name="Le Bouguenec C."/>
            <person name="Lescat M."/>
            <person name="Mangenot S."/>
            <person name="Martinez-Jehanne V."/>
            <person name="Matic I."/>
            <person name="Nassif X."/>
            <person name="Oztas S."/>
            <person name="Petit M.A."/>
            <person name="Pichon C."/>
            <person name="Rouy Z."/>
            <person name="Ruf C.S."/>
            <person name="Schneider D."/>
            <person name="Tourret J."/>
            <person name="Vacherie B."/>
            <person name="Vallenet D."/>
            <person name="Medigue C."/>
            <person name="Rocha E.P.C."/>
            <person name="Denamur E."/>
        </authorList>
    </citation>
    <scope>NUCLEOTIDE SEQUENCE [LARGE SCALE GENOMIC DNA]</scope>
    <source>
        <strain>S88 / ExPEC</strain>
    </source>
</reference>